<keyword id="KW-0024">Alternative initiation</keyword>
<sequence length="76" mass="8391">MDLETRVSGHEKPKKEIRRIPDCQYAKTRSSPCEPLWGLEEAASRTSAGSWAHQDGLGDSSLFEIHGNQAITGSHQ</sequence>
<protein>
    <recommendedName>
        <fullName>uORF2 protein</fullName>
    </recommendedName>
</protein>
<accession>P0DXO0</accession>
<evidence type="ECO:0000269" key="1">
    <source>
    </source>
</evidence>
<evidence type="ECO:0000305" key="2"/>
<name>ORF2_ZIKVF</name>
<feature type="chain" id="PRO_0000461828" description="uORF2 protein">
    <location>
        <begin position="1"/>
        <end position="76"/>
    </location>
</feature>
<organism>
    <name type="scientific">Zika virus (isolate ZIKV/Human/French Polynesia/10087PF/2013)</name>
    <name type="common">ZIKV</name>
    <dbReference type="NCBI Taxonomy" id="2043570"/>
    <lineage>
        <taxon>Viruses</taxon>
        <taxon>Riboviria</taxon>
        <taxon>Orthornavirae</taxon>
        <taxon>Kitrinoviricota</taxon>
        <taxon>Flasuviricetes</taxon>
        <taxon>Amarillovirales</taxon>
        <taxon>Flaviviridae</taxon>
        <taxon>Orthoflavivirus</taxon>
        <taxon>Orthoflavivirus zikaense</taxon>
    </lineage>
</organism>
<dbReference type="EMBL" id="KJ776791">
    <property type="status" value="NOT_ANNOTATED_CDS"/>
    <property type="molecule type" value="Genomic_RNA"/>
</dbReference>
<dbReference type="Proteomes" id="UP000151151">
    <property type="component" value="Segment"/>
</dbReference>
<organismHost>
    <name type="scientific">Aedes aegypti</name>
    <name type="common">Yellowfever mosquito</name>
    <name type="synonym">Culex aegypti</name>
    <dbReference type="NCBI Taxonomy" id="7159"/>
</organismHost>
<organismHost>
    <name type="scientific">Aedes albopictus</name>
    <name type="common">Asian tiger mosquito</name>
    <name type="synonym">Stegomyia albopicta</name>
    <dbReference type="NCBI Taxonomy" id="7160"/>
</organismHost>
<organismHost>
    <name type="scientific">Homo sapiens</name>
    <name type="common">Human</name>
    <dbReference type="NCBI Taxonomy" id="9606"/>
</organismHost>
<organismHost>
    <name type="scientific">Macaca mulatta</name>
    <name type="common">Rhesus macaque</name>
    <dbReference type="NCBI Taxonomy" id="9544"/>
</organismHost>
<reference key="1">
    <citation type="journal article" date="2014" name="Genome Announc.">
        <title>Complete coding sequence of zika virus from a French polynesia outbreak in 2013.</title>
        <authorList>
            <person name="Baronti C."/>
            <person name="Piorkowski G."/>
            <person name="Charrel R.N."/>
            <person name="Boubis L."/>
            <person name="Leparc-Goffart I."/>
            <person name="de Lamballerie X."/>
        </authorList>
    </citation>
    <scope>NUCLEOTIDE SEQUENCE [LARGE SCALE GENOMIC DNA]</scope>
</reference>
<reference key="2">
    <citation type="journal article" date="2024" name="Nat. Commun.">
        <title>Zika viruses encode 5' upstream open reading frames affecting infection of human brain cells.</title>
        <authorList>
            <person name="Lefevre C."/>
            <person name="Cook G.M."/>
            <person name="Dinan A.M."/>
            <person name="Torii S."/>
            <person name="Stewart H."/>
            <person name="Gibbons G."/>
            <person name="Nicholson A.S."/>
            <person name="Echavarria-Consuegra L."/>
            <person name="Meredith L.W."/>
            <person name="Lulla V."/>
            <person name="McGovern N."/>
            <person name="Kenyon J.C."/>
            <person name="Goodfellow I."/>
            <person name="Deane J.E."/>
            <person name="Graham S.C."/>
            <person name="Lakatos A."/>
            <person name="Lambrechts L."/>
            <person name="Brierley I."/>
            <person name="Irigoyen N."/>
        </authorList>
    </citation>
    <scope>ALTERNATIVE INITIATION (ISOFORM UROF1 AND UORF2)</scope>
    <scope>FUNCTION</scope>
    <source>
        <strain>Isolate PE243</strain>
    </source>
</reference>
<comment type="function">
    <text evidence="1">Plays a role in viral replication.</text>
</comment>
<comment type="alternative products">
    <event type="alternative initiation"/>
    <isoform>
        <id>P0DXO0-1</id>
        <name evidence="1">uORF2 protein</name>
        <sequence type="displayed"/>
    </isoform>
    <isoform>
        <id>P0DXO2-1</id>
        <name evidence="1">uORF1 protein</name>
        <sequence type="external"/>
    </isoform>
    <isoform>
        <id>A0A024B7W1-1</id>
        <name>Genome polyprotein</name>
        <sequence type="external"/>
    </isoform>
</comment>
<comment type="miscellaneous">
    <text evidence="1">Product of an upstream open reading frame of the genome polyprotein gene.</text>
</comment>
<comment type="miscellaneous">
    <text evidence="1">The initiator methionine is coded by an unusual start codon TTG.</text>
</comment>
<comment type="miscellaneous">
    <text evidence="2">Belongs to the Zika virus American lineage encoding for a two uORF.</text>
</comment>
<proteinExistence type="predicted"/>